<proteinExistence type="evidence at protein level"/>
<dbReference type="GO" id="GO:0005576">
    <property type="term" value="C:extracellular region"/>
    <property type="evidence" value="ECO:0007669"/>
    <property type="project" value="UniProtKB-SubCell"/>
</dbReference>
<dbReference type="GO" id="GO:0004190">
    <property type="term" value="F:aspartic-type endopeptidase activity"/>
    <property type="evidence" value="ECO:0007669"/>
    <property type="project" value="UniProtKB-KW"/>
</dbReference>
<dbReference type="GO" id="GO:0006508">
    <property type="term" value="P:proteolysis"/>
    <property type="evidence" value="ECO:0007669"/>
    <property type="project" value="UniProtKB-KW"/>
</dbReference>
<keyword id="KW-0064">Aspartyl protease</keyword>
<keyword id="KW-0903">Direct protein sequencing</keyword>
<keyword id="KW-0378">Hydrolase</keyword>
<keyword id="KW-0645">Protease</keyword>
<keyword id="KW-0964">Secreted</keyword>
<organism>
    <name type="scientific">Dama dama</name>
    <name type="common">Fallow deer</name>
    <name type="synonym">Cervus dama</name>
    <dbReference type="NCBI Taxonomy" id="30532"/>
    <lineage>
        <taxon>Eukaryota</taxon>
        <taxon>Metazoa</taxon>
        <taxon>Chordata</taxon>
        <taxon>Craniata</taxon>
        <taxon>Vertebrata</taxon>
        <taxon>Euteleostomi</taxon>
        <taxon>Mammalia</taxon>
        <taxon>Eutheria</taxon>
        <taxon>Laurasiatheria</taxon>
        <taxon>Artiodactyla</taxon>
        <taxon>Ruminantia</taxon>
        <taxon>Pecora</taxon>
        <taxon>Cervidae</taxon>
        <taxon>Cervinae</taxon>
        <taxon>Dama</taxon>
    </lineage>
</organism>
<protein>
    <recommendedName>
        <fullName evidence="4">Pregnancy-associated glycoprotein 62A</fullName>
        <shortName evidence="4">FdPAG62A</shortName>
    </recommendedName>
</protein>
<name>PA62A_DAMDA</name>
<reference evidence="5" key="1">
    <citation type="journal article" date="2014" name="Acta Vet. Scand.">
        <title>Identification of pregnancy-associated glycoproteins and alpha-fetoprotein in fallow deer (Dama dama) placenta.</title>
        <authorList>
            <person name="Beriot M."/>
            <person name="Tchimbou A.F."/>
            <person name="Barbato O."/>
            <person name="Beckers J.F."/>
            <person name="de Sousa N.M."/>
        </authorList>
    </citation>
    <scope>PROTEIN SEQUENCE</scope>
    <scope>TISSUE SPECIFICITY</scope>
    <source>
        <tissue evidence="4">Fetal cotyledon</tissue>
    </source>
</reference>
<feature type="chain" id="PRO_0000423390" description="Pregnancy-associated glycoprotein 62A" evidence="3">
    <location>
        <begin position="1"/>
        <end position="12" status="greater than"/>
    </location>
</feature>
<feature type="non-terminal residue" evidence="4">
    <location>
        <position position="12"/>
    </location>
</feature>
<sequence>YQKSSPGSNITT</sequence>
<evidence type="ECO:0000250" key="1">
    <source>
        <dbReference type="UniProtKB" id="Q29432"/>
    </source>
</evidence>
<evidence type="ECO:0000255" key="2"/>
<evidence type="ECO:0000269" key="3">
    <source>
    </source>
</evidence>
<evidence type="ECO:0000303" key="4">
    <source>
    </source>
</evidence>
<evidence type="ECO:0000305" key="5"/>
<comment type="subcellular location">
    <subcellularLocation>
        <location evidence="1">Secreted</location>
        <location evidence="1">Extracellular space</location>
    </subcellularLocation>
</comment>
<comment type="tissue specificity">
    <text evidence="3">Expressed in placenta, specifically the fetal cotyledonary tissue (FCT) (at protein level).</text>
</comment>
<comment type="similarity">
    <text evidence="2">Belongs to the peptidase A1 family.</text>
</comment>
<accession>C0HJC7</accession>